<comment type="function">
    <text evidence="1">Isomerase that catalyzes the conversion of deoxy-ribose 1-phosphate (dRib-1-P) and ribose 1-phosphate (Rib-1-P) to deoxy-ribose 5-phosphate (dRib-5-P) and ribose 5-phosphate (Rib-5-P), respectively.</text>
</comment>
<comment type="catalytic activity">
    <reaction evidence="1">
        <text>2-deoxy-alpha-D-ribose 1-phosphate = 2-deoxy-D-ribose 5-phosphate</text>
        <dbReference type="Rhea" id="RHEA:27658"/>
        <dbReference type="ChEBI" id="CHEBI:57259"/>
        <dbReference type="ChEBI" id="CHEBI:62877"/>
        <dbReference type="EC" id="5.4.2.7"/>
    </reaction>
</comment>
<comment type="catalytic activity">
    <reaction evidence="1">
        <text>alpha-D-ribose 1-phosphate = D-ribose 5-phosphate</text>
        <dbReference type="Rhea" id="RHEA:18793"/>
        <dbReference type="ChEBI" id="CHEBI:57720"/>
        <dbReference type="ChEBI" id="CHEBI:78346"/>
        <dbReference type="EC" id="5.4.2.7"/>
    </reaction>
</comment>
<comment type="cofactor">
    <cofactor evidence="1">
        <name>Mn(2+)</name>
        <dbReference type="ChEBI" id="CHEBI:29035"/>
    </cofactor>
    <text evidence="1">Binds 2 manganese ions.</text>
</comment>
<comment type="pathway">
    <text evidence="1">Carbohydrate degradation; 2-deoxy-D-ribose 1-phosphate degradation; D-glyceraldehyde 3-phosphate and acetaldehyde from 2-deoxy-alpha-D-ribose 1-phosphate: step 1/2.</text>
</comment>
<comment type="subcellular location">
    <subcellularLocation>
        <location evidence="1">Cytoplasm</location>
    </subcellularLocation>
</comment>
<comment type="similarity">
    <text evidence="1">Belongs to the phosphopentomutase family.</text>
</comment>
<evidence type="ECO:0000255" key="1">
    <source>
        <dbReference type="HAMAP-Rule" id="MF_00740"/>
    </source>
</evidence>
<gene>
    <name evidence="1" type="primary">deoB</name>
    <name type="ordered locus">BCAH187_A4220</name>
</gene>
<protein>
    <recommendedName>
        <fullName evidence="1">Phosphopentomutase</fullName>
        <ecNumber evidence="1">5.4.2.7</ecNumber>
    </recommendedName>
    <alternativeName>
        <fullName evidence="1">Phosphodeoxyribomutase</fullName>
    </alternativeName>
</protein>
<dbReference type="EC" id="5.4.2.7" evidence="1"/>
<dbReference type="EMBL" id="CP001177">
    <property type="protein sequence ID" value="ACJ82099.1"/>
    <property type="molecule type" value="Genomic_DNA"/>
</dbReference>
<dbReference type="SMR" id="B7HN67"/>
<dbReference type="KEGG" id="bcr:BCAH187_A4220"/>
<dbReference type="HOGENOM" id="CLU_053861_0_0_9"/>
<dbReference type="UniPathway" id="UPA00002">
    <property type="reaction ID" value="UER00467"/>
</dbReference>
<dbReference type="Proteomes" id="UP000002214">
    <property type="component" value="Chromosome"/>
</dbReference>
<dbReference type="GO" id="GO:0005829">
    <property type="term" value="C:cytosol"/>
    <property type="evidence" value="ECO:0007669"/>
    <property type="project" value="TreeGrafter"/>
</dbReference>
<dbReference type="GO" id="GO:0000287">
    <property type="term" value="F:magnesium ion binding"/>
    <property type="evidence" value="ECO:0007669"/>
    <property type="project" value="InterPro"/>
</dbReference>
<dbReference type="GO" id="GO:0030145">
    <property type="term" value="F:manganese ion binding"/>
    <property type="evidence" value="ECO:0007669"/>
    <property type="project" value="UniProtKB-UniRule"/>
</dbReference>
<dbReference type="GO" id="GO:0008973">
    <property type="term" value="F:phosphopentomutase activity"/>
    <property type="evidence" value="ECO:0007669"/>
    <property type="project" value="UniProtKB-UniRule"/>
</dbReference>
<dbReference type="GO" id="GO:0006018">
    <property type="term" value="P:2-deoxyribose 1-phosphate catabolic process"/>
    <property type="evidence" value="ECO:0007669"/>
    <property type="project" value="UniProtKB-UniRule"/>
</dbReference>
<dbReference type="GO" id="GO:0006015">
    <property type="term" value="P:5-phosphoribose 1-diphosphate biosynthetic process"/>
    <property type="evidence" value="ECO:0007669"/>
    <property type="project" value="UniProtKB-UniPathway"/>
</dbReference>
<dbReference type="GO" id="GO:0043094">
    <property type="term" value="P:metabolic compound salvage"/>
    <property type="evidence" value="ECO:0007669"/>
    <property type="project" value="InterPro"/>
</dbReference>
<dbReference type="GO" id="GO:0009117">
    <property type="term" value="P:nucleotide metabolic process"/>
    <property type="evidence" value="ECO:0007669"/>
    <property type="project" value="InterPro"/>
</dbReference>
<dbReference type="CDD" id="cd16009">
    <property type="entry name" value="PPM"/>
    <property type="match status" value="1"/>
</dbReference>
<dbReference type="FunFam" id="3.30.70.1250:FF:000001">
    <property type="entry name" value="Phosphopentomutase"/>
    <property type="match status" value="1"/>
</dbReference>
<dbReference type="Gene3D" id="3.40.720.10">
    <property type="entry name" value="Alkaline Phosphatase, subunit A"/>
    <property type="match status" value="1"/>
</dbReference>
<dbReference type="Gene3D" id="3.30.70.1250">
    <property type="entry name" value="Phosphopentomutase"/>
    <property type="match status" value="1"/>
</dbReference>
<dbReference type="HAMAP" id="MF_00740">
    <property type="entry name" value="Phosphopentomut"/>
    <property type="match status" value="1"/>
</dbReference>
<dbReference type="InterPro" id="IPR017850">
    <property type="entry name" value="Alkaline_phosphatase_core_sf"/>
</dbReference>
<dbReference type="InterPro" id="IPR010045">
    <property type="entry name" value="DeoB"/>
</dbReference>
<dbReference type="InterPro" id="IPR006124">
    <property type="entry name" value="Metalloenzyme"/>
</dbReference>
<dbReference type="InterPro" id="IPR024052">
    <property type="entry name" value="Phosphopentomutase_DeoB_cap_sf"/>
</dbReference>
<dbReference type="NCBIfam" id="TIGR01696">
    <property type="entry name" value="deoB"/>
    <property type="match status" value="1"/>
</dbReference>
<dbReference type="NCBIfam" id="NF003766">
    <property type="entry name" value="PRK05362.1"/>
    <property type="match status" value="1"/>
</dbReference>
<dbReference type="PANTHER" id="PTHR21110">
    <property type="entry name" value="PHOSPHOPENTOMUTASE"/>
    <property type="match status" value="1"/>
</dbReference>
<dbReference type="PANTHER" id="PTHR21110:SF0">
    <property type="entry name" value="PHOSPHOPENTOMUTASE"/>
    <property type="match status" value="1"/>
</dbReference>
<dbReference type="Pfam" id="PF01676">
    <property type="entry name" value="Metalloenzyme"/>
    <property type="match status" value="1"/>
</dbReference>
<dbReference type="PIRSF" id="PIRSF001491">
    <property type="entry name" value="Ppentomutase"/>
    <property type="match status" value="1"/>
</dbReference>
<dbReference type="SUPFAM" id="SSF53649">
    <property type="entry name" value="Alkaline phosphatase-like"/>
    <property type="match status" value="1"/>
</dbReference>
<dbReference type="SUPFAM" id="SSF143856">
    <property type="entry name" value="DeoB insert domain-like"/>
    <property type="match status" value="1"/>
</dbReference>
<feature type="chain" id="PRO_1000133062" description="Phosphopentomutase">
    <location>
        <begin position="1"/>
        <end position="394"/>
    </location>
</feature>
<feature type="binding site" evidence="1">
    <location>
        <position position="13"/>
    </location>
    <ligand>
        <name>Mn(2+)</name>
        <dbReference type="ChEBI" id="CHEBI:29035"/>
        <label>1</label>
    </ligand>
</feature>
<feature type="binding site" evidence="1">
    <location>
        <position position="286"/>
    </location>
    <ligand>
        <name>Mn(2+)</name>
        <dbReference type="ChEBI" id="CHEBI:29035"/>
        <label>2</label>
    </ligand>
</feature>
<feature type="binding site" evidence="1">
    <location>
        <position position="291"/>
    </location>
    <ligand>
        <name>Mn(2+)</name>
        <dbReference type="ChEBI" id="CHEBI:29035"/>
        <label>2</label>
    </ligand>
</feature>
<feature type="binding site" evidence="1">
    <location>
        <position position="327"/>
    </location>
    <ligand>
        <name>Mn(2+)</name>
        <dbReference type="ChEBI" id="CHEBI:29035"/>
        <label>1</label>
    </ligand>
</feature>
<feature type="binding site" evidence="1">
    <location>
        <position position="328"/>
    </location>
    <ligand>
        <name>Mn(2+)</name>
        <dbReference type="ChEBI" id="CHEBI:29035"/>
        <label>1</label>
    </ligand>
</feature>
<feature type="binding site" evidence="1">
    <location>
        <position position="339"/>
    </location>
    <ligand>
        <name>Mn(2+)</name>
        <dbReference type="ChEBI" id="CHEBI:29035"/>
        <label>2</label>
    </ligand>
</feature>
<keyword id="KW-0963">Cytoplasm</keyword>
<keyword id="KW-0413">Isomerase</keyword>
<keyword id="KW-0464">Manganese</keyword>
<keyword id="KW-0479">Metal-binding</keyword>
<name>DEOB_BACC7</name>
<accession>B7HN67</accession>
<organism>
    <name type="scientific">Bacillus cereus (strain AH187)</name>
    <dbReference type="NCBI Taxonomy" id="405534"/>
    <lineage>
        <taxon>Bacteria</taxon>
        <taxon>Bacillati</taxon>
        <taxon>Bacillota</taxon>
        <taxon>Bacilli</taxon>
        <taxon>Bacillales</taxon>
        <taxon>Bacillaceae</taxon>
        <taxon>Bacillus</taxon>
        <taxon>Bacillus cereus group</taxon>
    </lineage>
</organism>
<proteinExistence type="inferred from homology"/>
<reference key="1">
    <citation type="submission" date="2008-10" db="EMBL/GenBank/DDBJ databases">
        <title>Genome sequence of Bacillus cereus AH187.</title>
        <authorList>
            <person name="Dodson R.J."/>
            <person name="Durkin A.S."/>
            <person name="Rosovitz M.J."/>
            <person name="Rasko D.A."/>
            <person name="Kolsto A.B."/>
            <person name="Okstad O.A."/>
            <person name="Ravel J."/>
            <person name="Sutton G."/>
        </authorList>
    </citation>
    <scope>NUCLEOTIDE SEQUENCE [LARGE SCALE GENOMIC DNA]</scope>
    <source>
        <strain>AH187</strain>
    </source>
</reference>
<sequence length="394" mass="44104">MNKYKRIFLVVMDSVGIGEAPDAEQFGDLGSDTIGHIAEHMNGLQMPNMVKLGLGNIREMKGISKVEKPLGYYTKMQEKSTGKDTMTGHWEIMGLYIDTPFQVFPEGFPKELLDELEEKTGRKIIGNKPASGTEILDELGQEQMETGSLIVYTSADSVLQIAAHEEVVPLDELYKICKIARELTLDEKYMVGRVIARPFVGEPGNFTRTPNRHDYALKPFGRTVMNELKDSDYDVIAIGKISDIYDGEGVTESLRTKSNMDGMDKLVDTLNMDFTGLSFLNLVDFDALFGHRRDPQGYGEALQEYDARLPEVFEKLKEDDLLLITADHGNDPVHHGTDHTREYVPLLAYSPSMKEGGQELPLRQTFADIGATVAENFGVKMPEYGTSFLNELKK</sequence>